<protein>
    <recommendedName>
        <fullName>Kallikrein 1-related peptidase b27</fullName>
        <ecNumber>3.4.21.-</ecNumber>
    </recommendedName>
    <alternativeName>
        <fullName>Glandular kallikrein K27</fullName>
        <shortName>mGK-27</shortName>
    </alternativeName>
    <alternativeName>
        <fullName>Tissue kallikrein 27</fullName>
        <shortName>mKlk27</shortName>
    </alternativeName>
</protein>
<gene>
    <name type="primary">Klk1b27</name>
    <name type="synonym">Klk-27</name>
    <name type="synonym">Klk27</name>
</gene>
<sequence>MRFLILFLALSLGGIDAAPPVQSRIIGGFKCKKNSQPWHVAVLRSNKYICGGVLLDPNWVLTAAHCYGNDTSQHNVWLGKNKLFQREPSAQHRWVSKSFPHPDYNMSLLNDHIPHPEDKSNDLMLLRLSKPADITDAVKPIDLPTEEPKLGSTCLASGWGSITPTKYQIPNDLQCVFIKLLPNENCAKAYVHKVTDVMLCVGETGGGKGTCKGDSGGPLICDGVLHGITSWGSIPCAKPNAPGVFTKLIKFTSWIKDTMAKNP</sequence>
<reference evidence="5" key="1">
    <citation type="journal article" date="2000" name="Eur. J. Biochem.">
        <title>Cloning and characterization of mouse Klk27, a novel tissue kallikrein expressed in testicular Leydig cells and exhibiting chymotrypsin-like specificity.</title>
        <authorList>
            <person name="Matsui H."/>
            <person name="Moriyama A."/>
            <person name="Takahashi T."/>
        </authorList>
    </citation>
    <scope>NUCLEOTIDE SEQUENCE [MRNA]</scope>
    <scope>CATALYTIC ACTIVITY</scope>
    <scope>TISSUE SPECIFICITY</scope>
    <scope>DEVELOPMENTAL STAGE</scope>
    <scope>MUTAGENESIS OF GLY-209</scope>
    <source>
        <tissue evidence="4">Testis</tissue>
    </source>
</reference>
<reference key="2">
    <citation type="journal article" date="2004" name="Genome Res.">
        <title>The status, quality, and expansion of the NIH full-length cDNA project: the Mammalian Gene Collection (MGC).</title>
        <authorList>
            <consortium name="The MGC Project Team"/>
        </authorList>
    </citation>
    <scope>NUCLEOTIDE SEQUENCE [LARGE SCALE MRNA]</scope>
    <source>
        <tissue>Brain</tissue>
    </source>
</reference>
<organism evidence="6">
    <name type="scientific">Mus musculus</name>
    <name type="common">Mouse</name>
    <dbReference type="NCBI Taxonomy" id="10090"/>
    <lineage>
        <taxon>Eukaryota</taxon>
        <taxon>Metazoa</taxon>
        <taxon>Chordata</taxon>
        <taxon>Craniata</taxon>
        <taxon>Vertebrata</taxon>
        <taxon>Euteleostomi</taxon>
        <taxon>Mammalia</taxon>
        <taxon>Eutheria</taxon>
        <taxon>Euarchontoglires</taxon>
        <taxon>Glires</taxon>
        <taxon>Rodentia</taxon>
        <taxon>Myomorpha</taxon>
        <taxon>Muroidea</taxon>
        <taxon>Muridae</taxon>
        <taxon>Murinae</taxon>
        <taxon>Mus</taxon>
        <taxon>Mus</taxon>
    </lineage>
</organism>
<keyword id="KW-1015">Disulfide bond</keyword>
<keyword id="KW-0325">Glycoprotein</keyword>
<keyword id="KW-0378">Hydrolase</keyword>
<keyword id="KW-0645">Protease</keyword>
<keyword id="KW-1185">Reference proteome</keyword>
<keyword id="KW-0720">Serine protease</keyword>
<keyword id="KW-0732">Signal</keyword>
<keyword id="KW-0865">Zymogen</keyword>
<dbReference type="EC" id="3.4.21.-"/>
<dbReference type="EMBL" id="AB039275">
    <property type="protein sequence ID" value="BAA92318.1"/>
    <property type="molecule type" value="mRNA"/>
</dbReference>
<dbReference type="EMBL" id="BC132090">
    <property type="protein sequence ID" value="AAI32091.1"/>
    <property type="molecule type" value="mRNA"/>
</dbReference>
<dbReference type="EMBL" id="BC132665">
    <property type="protein sequence ID" value="AAI32666.1"/>
    <property type="molecule type" value="mRNA"/>
</dbReference>
<dbReference type="CCDS" id="CCDS21194.1"/>
<dbReference type="RefSeq" id="NP_064664.1">
    <property type="nucleotide sequence ID" value="NM_020268.3"/>
</dbReference>
<dbReference type="SMR" id="Q9JM71"/>
<dbReference type="BioGRID" id="200982">
    <property type="interactions" value="3"/>
</dbReference>
<dbReference type="FunCoup" id="Q9JM71">
    <property type="interactions" value="85"/>
</dbReference>
<dbReference type="STRING" id="10090.ENSMUSP00000078786"/>
<dbReference type="MEROPS" id="S01.073"/>
<dbReference type="GlyCosmos" id="Q9JM71">
    <property type="glycosylation" value="2 sites, No reported glycans"/>
</dbReference>
<dbReference type="GlyGen" id="Q9JM71">
    <property type="glycosylation" value="2 sites"/>
</dbReference>
<dbReference type="PaxDb" id="10090-ENSMUSP00000078786"/>
<dbReference type="ProteomicsDB" id="269137"/>
<dbReference type="DNASU" id="16619"/>
<dbReference type="Ensembl" id="ENSMUST00000079859.7">
    <property type="protein sequence ID" value="ENSMUSP00000078786.6"/>
    <property type="gene ID" value="ENSMUSG00000063177.7"/>
</dbReference>
<dbReference type="GeneID" id="16619"/>
<dbReference type="KEGG" id="mmu:16619"/>
<dbReference type="UCSC" id="uc009gog.1">
    <property type="organism name" value="mouse"/>
</dbReference>
<dbReference type="AGR" id="MGI:891980"/>
<dbReference type="CTD" id="16619"/>
<dbReference type="MGI" id="MGI:891980">
    <property type="gene designation" value="Klk1b27"/>
</dbReference>
<dbReference type="VEuPathDB" id="HostDB:ENSMUSG00000063177"/>
<dbReference type="eggNOG" id="KOG3627">
    <property type="taxonomic scope" value="Eukaryota"/>
</dbReference>
<dbReference type="GeneTree" id="ENSGT01020000230389"/>
<dbReference type="HOGENOM" id="CLU_006842_1_1_1"/>
<dbReference type="InParanoid" id="Q9JM71"/>
<dbReference type="OMA" id="IGGRECL"/>
<dbReference type="OrthoDB" id="10061449at2759"/>
<dbReference type="PhylomeDB" id="Q9JM71"/>
<dbReference type="TreeFam" id="TF331065"/>
<dbReference type="Reactome" id="R-MMU-1592389">
    <property type="pathway name" value="Activation of Matrix Metalloproteinases"/>
</dbReference>
<dbReference type="BioGRID-ORCS" id="16619">
    <property type="hits" value="3 hits in 78 CRISPR screens"/>
</dbReference>
<dbReference type="PRO" id="PR:Q9JM71"/>
<dbReference type="Proteomes" id="UP000000589">
    <property type="component" value="Chromosome 7"/>
</dbReference>
<dbReference type="RNAct" id="Q9JM71">
    <property type="molecule type" value="protein"/>
</dbReference>
<dbReference type="Bgee" id="ENSMUSG00000063177">
    <property type="expression patterns" value="Expressed in submandibular gland and 10 other cell types or tissues"/>
</dbReference>
<dbReference type="GO" id="GO:0008233">
    <property type="term" value="F:peptidase activity"/>
    <property type="evidence" value="ECO:0000314"/>
    <property type="project" value="MGI"/>
</dbReference>
<dbReference type="GO" id="GO:0004252">
    <property type="term" value="F:serine-type endopeptidase activity"/>
    <property type="evidence" value="ECO:0000314"/>
    <property type="project" value="UniProtKB"/>
</dbReference>
<dbReference type="GO" id="GO:0006508">
    <property type="term" value="P:proteolysis"/>
    <property type="evidence" value="ECO:0000314"/>
    <property type="project" value="UniProtKB"/>
</dbReference>
<dbReference type="CDD" id="cd00190">
    <property type="entry name" value="Tryp_SPc"/>
    <property type="match status" value="1"/>
</dbReference>
<dbReference type="FunFam" id="2.40.10.10:FF:000032">
    <property type="entry name" value="Kallikrein 1-related peptidase C9"/>
    <property type="match status" value="1"/>
</dbReference>
<dbReference type="FunFam" id="2.40.10.10:FF:000042">
    <property type="entry name" value="Kallikrein 1-related peptidase C9"/>
    <property type="match status" value="1"/>
</dbReference>
<dbReference type="Gene3D" id="2.40.10.10">
    <property type="entry name" value="Trypsin-like serine proteases"/>
    <property type="match status" value="2"/>
</dbReference>
<dbReference type="InterPro" id="IPR009003">
    <property type="entry name" value="Peptidase_S1_PA"/>
</dbReference>
<dbReference type="InterPro" id="IPR043504">
    <property type="entry name" value="Peptidase_S1_PA_chymotrypsin"/>
</dbReference>
<dbReference type="InterPro" id="IPR001314">
    <property type="entry name" value="Peptidase_S1A"/>
</dbReference>
<dbReference type="InterPro" id="IPR001254">
    <property type="entry name" value="Trypsin_dom"/>
</dbReference>
<dbReference type="InterPro" id="IPR018114">
    <property type="entry name" value="TRYPSIN_HIS"/>
</dbReference>
<dbReference type="InterPro" id="IPR033116">
    <property type="entry name" value="TRYPSIN_SER"/>
</dbReference>
<dbReference type="PANTHER" id="PTHR24271:SF47">
    <property type="entry name" value="KALLIKREIN-1"/>
    <property type="match status" value="1"/>
</dbReference>
<dbReference type="PANTHER" id="PTHR24271">
    <property type="entry name" value="KALLIKREIN-RELATED"/>
    <property type="match status" value="1"/>
</dbReference>
<dbReference type="Pfam" id="PF00089">
    <property type="entry name" value="Trypsin"/>
    <property type="match status" value="1"/>
</dbReference>
<dbReference type="PRINTS" id="PR00722">
    <property type="entry name" value="CHYMOTRYPSIN"/>
</dbReference>
<dbReference type="SMART" id="SM00020">
    <property type="entry name" value="Tryp_SPc"/>
    <property type="match status" value="1"/>
</dbReference>
<dbReference type="SUPFAM" id="SSF50494">
    <property type="entry name" value="Trypsin-like serine proteases"/>
    <property type="match status" value="1"/>
</dbReference>
<dbReference type="PROSITE" id="PS50240">
    <property type="entry name" value="TRYPSIN_DOM"/>
    <property type="match status" value="1"/>
</dbReference>
<dbReference type="PROSITE" id="PS00134">
    <property type="entry name" value="TRYPSIN_HIS"/>
    <property type="match status" value="1"/>
</dbReference>
<dbReference type="PROSITE" id="PS00135">
    <property type="entry name" value="TRYPSIN_SER"/>
    <property type="match status" value="1"/>
</dbReference>
<evidence type="ECO:0000250" key="1">
    <source>
        <dbReference type="UniProtKB" id="P36368"/>
    </source>
</evidence>
<evidence type="ECO:0000255" key="2"/>
<evidence type="ECO:0000255" key="3">
    <source>
        <dbReference type="PROSITE-ProRule" id="PRU00274"/>
    </source>
</evidence>
<evidence type="ECO:0000269" key="4">
    <source>
    </source>
</evidence>
<evidence type="ECO:0000305" key="5"/>
<evidence type="ECO:0000312" key="6">
    <source>
        <dbReference type="EMBL" id="BAA92318.1"/>
    </source>
</evidence>
<accession>Q9JM71</accession>
<accession>A2RSF8</accession>
<feature type="signal peptide" evidence="2">
    <location>
        <begin position="1"/>
        <end position="17"/>
    </location>
</feature>
<feature type="propeptide" id="PRO_0000027995" description="Activation peptide" evidence="1">
    <location>
        <begin position="18"/>
        <end position="24"/>
    </location>
</feature>
<feature type="chain" id="PRO_0000027996" description="Kallikrein 1-related peptidase b27">
    <location>
        <begin position="25"/>
        <end position="263"/>
    </location>
</feature>
<feature type="domain" description="Peptidase S1" evidence="3">
    <location>
        <begin position="25"/>
        <end position="260"/>
    </location>
</feature>
<feature type="active site" description="Charge relay system" evidence="1">
    <location>
        <position position="65"/>
    </location>
</feature>
<feature type="active site" description="Charge relay system" evidence="1">
    <location>
        <position position="122"/>
    </location>
</feature>
<feature type="active site" description="Charge relay system" evidence="1">
    <location>
        <position position="215"/>
    </location>
</feature>
<feature type="glycosylation site" description="N-linked (GlcNAc...) asparagine" evidence="5">
    <location>
        <position position="69"/>
    </location>
</feature>
<feature type="glycosylation site" description="N-linked (GlcNAc...) asparagine" evidence="5">
    <location>
        <position position="105"/>
    </location>
</feature>
<feature type="disulfide bond" evidence="1 3">
    <location>
        <begin position="31"/>
        <end position="175"/>
    </location>
</feature>
<feature type="disulfide bond" evidence="1 3">
    <location>
        <begin position="50"/>
        <end position="66"/>
    </location>
</feature>
<feature type="disulfide bond" evidence="1 3">
    <location>
        <begin position="154"/>
        <end position="221"/>
    </location>
</feature>
<feature type="disulfide bond" evidence="1 3">
    <location>
        <begin position="186"/>
        <end position="200"/>
    </location>
</feature>
<feature type="disulfide bond" evidence="1 3">
    <location>
        <begin position="211"/>
        <end position="236"/>
    </location>
</feature>
<feature type="mutagenesis site" description="Loss of chymotryptic specificity and acquisition of trypsin-like cleavage specificity." evidence="4">
    <original>G</original>
    <variation>D</variation>
    <location>
        <position position="209"/>
    </location>
</feature>
<name>K1B27_MOUSE</name>
<comment type="function">
    <text>Serine protease with chymotrypsin-like cleavage specificity. Shows activity towards casein, gelatin, IGFBP3 and fibronectin but not towards laminin or collagens I and IV. Does not hydrolyze kininogin to release Lys-bradykinin.</text>
</comment>
<comment type="activity regulation">
    <text evidence="4">Strongly inhibited by protease inhibitors diisopropyl fluorophosphate, phenylmethanesulfonyl fluoride and SBTI.</text>
</comment>
<comment type="tissue specificity">
    <text evidence="4">Expressed in testis and submaxillary gland. Not expressed in heart, brain, spleen, lung, liver, muscle, kidney and ovary. In the testis, expression localized specifically to Leydig cells in the interstitial tissues.</text>
</comment>
<comment type="developmental stage">
    <text evidence="4">Detectable in testis 4 weeks after birth, becoming more prominent thereafter.</text>
</comment>
<comment type="similarity">
    <text evidence="3">Belongs to the peptidase S1 family. Kallikrein subfamily.</text>
</comment>
<proteinExistence type="evidence at protein level"/>